<protein>
    <recommendedName>
        <fullName evidence="6">Alpha-2,8-sialyltransferase 8B</fullName>
        <ecNumber evidence="5">2.4.3.-</ecNumber>
    </recommendedName>
    <alternativeName>
        <fullName>Polysialic acid synthase</fullName>
    </alternativeName>
    <alternativeName>
        <fullName>Sialyltransferase 8B</fullName>
        <shortName>SIAT8-B</shortName>
    </alternativeName>
    <alternativeName>
        <fullName>Sialyltransferase St8Sia II</fullName>
        <shortName>ST8SiaII</shortName>
    </alternativeName>
    <alternativeName>
        <fullName evidence="2">Sialyltransferase X</fullName>
        <shortName evidence="2">STX</shortName>
    </alternativeName>
</protein>
<keyword id="KW-1003">Cell membrane</keyword>
<keyword id="KW-1015">Disulfide bond</keyword>
<keyword id="KW-0325">Glycoprotein</keyword>
<keyword id="KW-0328">Glycosyltransferase</keyword>
<keyword id="KW-0333">Golgi apparatus</keyword>
<keyword id="KW-0472">Membrane</keyword>
<keyword id="KW-0547">Nucleotide-binding</keyword>
<keyword id="KW-1185">Reference proteome</keyword>
<keyword id="KW-0964">Secreted</keyword>
<keyword id="KW-0735">Signal-anchor</keyword>
<keyword id="KW-0808">Transferase</keyword>
<keyword id="KW-0812">Transmembrane</keyword>
<keyword id="KW-1133">Transmembrane helix</keyword>
<gene>
    <name evidence="7" type="primary">St8sia2</name>
    <name type="synonym">Siat8b</name>
    <name evidence="2" type="synonym">Stx</name>
</gene>
<name>SIA8B_MOUSE</name>
<proteinExistence type="evidence at protein level"/>
<feature type="chain" id="PRO_0000149286" description="Alpha-2,8-sialyltransferase 8B">
    <location>
        <begin position="1"/>
        <end position="375"/>
    </location>
</feature>
<feature type="topological domain" description="Cytoplasmic" evidence="3">
    <location>
        <begin position="1"/>
        <end position="6"/>
    </location>
</feature>
<feature type="transmembrane region" description="Helical; Signal-anchor for type II membrane protein" evidence="3">
    <location>
        <begin position="7"/>
        <end position="23"/>
    </location>
</feature>
<feature type="topological domain" description="Lumenal" evidence="3">
    <location>
        <begin position="24"/>
        <end position="375"/>
    </location>
</feature>
<feature type="active site" description="Proton donor/acceptor" evidence="1">
    <location>
        <position position="346"/>
    </location>
</feature>
<feature type="binding site" evidence="1">
    <location>
        <position position="162"/>
    </location>
    <ligand>
        <name>CMP-N-acetyl-beta-neuraminate</name>
        <dbReference type="ChEBI" id="CHEBI:57812"/>
    </ligand>
</feature>
<feature type="binding site" evidence="1">
    <location>
        <position position="185"/>
    </location>
    <ligand>
        <name>CMP-N-acetyl-beta-neuraminate</name>
        <dbReference type="ChEBI" id="CHEBI:57812"/>
    </ligand>
</feature>
<feature type="binding site" evidence="1">
    <location>
        <position position="294"/>
    </location>
    <ligand>
        <name>CMP-N-acetyl-beta-neuraminate</name>
        <dbReference type="ChEBI" id="CHEBI:57812"/>
    </ligand>
</feature>
<feature type="binding site" evidence="1">
    <location>
        <position position="295"/>
    </location>
    <ligand>
        <name>CMP-N-acetyl-beta-neuraminate</name>
        <dbReference type="ChEBI" id="CHEBI:57812"/>
    </ligand>
</feature>
<feature type="binding site" evidence="1">
    <location>
        <position position="296"/>
    </location>
    <ligand>
        <name>CMP-N-acetyl-beta-neuraminate</name>
        <dbReference type="ChEBI" id="CHEBI:57812"/>
    </ligand>
</feature>
<feature type="binding site" evidence="1">
    <location>
        <position position="316"/>
    </location>
    <ligand>
        <name>CMP-N-acetyl-beta-neuraminate</name>
        <dbReference type="ChEBI" id="CHEBI:57812"/>
    </ligand>
</feature>
<feature type="binding site" evidence="1">
    <location>
        <position position="329"/>
    </location>
    <ligand>
        <name>CMP-N-acetyl-beta-neuraminate</name>
        <dbReference type="ChEBI" id="CHEBI:57812"/>
    </ligand>
</feature>
<feature type="binding site" evidence="1">
    <location>
        <position position="330"/>
    </location>
    <ligand>
        <name>CMP-N-acetyl-beta-neuraminate</name>
        <dbReference type="ChEBI" id="CHEBI:57812"/>
    </ligand>
</feature>
<feature type="glycosylation site" description="N-linked (GlcNAc...) asparagine" evidence="3">
    <location>
        <position position="60"/>
    </location>
</feature>
<feature type="glycosylation site" description="N-linked (GlcNAc...) asparagine" evidence="3">
    <location>
        <position position="72"/>
    </location>
</feature>
<feature type="glycosylation site" description="N-linked (GlcNAc...) asparagine" evidence="3">
    <location>
        <position position="89"/>
    </location>
</feature>
<feature type="glycosylation site" description="N-linked (GlcNAc...) asparagine" evidence="3">
    <location>
        <position position="134"/>
    </location>
</feature>
<feature type="glycosylation site" description="N-linked (GlcNAc...) asparagine" evidence="3">
    <location>
        <position position="219"/>
    </location>
</feature>
<feature type="glycosylation site" description="N-linked (GlcNAc...) asparagine" evidence="3">
    <location>
        <position position="234"/>
    </location>
</feature>
<feature type="disulfide bond" evidence="1">
    <location>
        <begin position="157"/>
        <end position="307"/>
    </location>
</feature>
<feature type="disulfide bond" evidence="1">
    <location>
        <begin position="171"/>
        <end position="371"/>
    </location>
</feature>
<feature type="sequence conflict" description="In Ref. 1; CAA67965/CAA58548." evidence="6" ref="1">
    <original>L</original>
    <variation>R</variation>
    <location>
        <position position="186"/>
    </location>
</feature>
<accession>O35696</accession>
<accession>Q4VA47</accession>
<dbReference type="EC" id="2.4.3.-" evidence="5"/>
<dbReference type="EMBL" id="X99646">
    <property type="protein sequence ID" value="CAA67965.1"/>
    <property type="molecule type" value="Genomic_DNA"/>
</dbReference>
<dbReference type="EMBL" id="X99647">
    <property type="protein sequence ID" value="CAA67965.1"/>
    <property type="status" value="JOINED"/>
    <property type="molecule type" value="Genomic_DNA"/>
</dbReference>
<dbReference type="EMBL" id="X99648">
    <property type="protein sequence ID" value="CAA67965.1"/>
    <property type="status" value="JOINED"/>
    <property type="molecule type" value="Genomic_DNA"/>
</dbReference>
<dbReference type="EMBL" id="X99651">
    <property type="protein sequence ID" value="CAA67965.1"/>
    <property type="status" value="JOINED"/>
    <property type="molecule type" value="Genomic_DNA"/>
</dbReference>
<dbReference type="EMBL" id="X99649">
    <property type="protein sequence ID" value="CAA67965.1"/>
    <property type="status" value="JOINED"/>
    <property type="molecule type" value="Genomic_DNA"/>
</dbReference>
<dbReference type="EMBL" id="X99650">
    <property type="protein sequence ID" value="CAA67965.1"/>
    <property type="status" value="JOINED"/>
    <property type="molecule type" value="Genomic_DNA"/>
</dbReference>
<dbReference type="EMBL" id="X83562">
    <property type="protein sequence ID" value="CAA58548.1"/>
    <property type="molecule type" value="mRNA"/>
</dbReference>
<dbReference type="EMBL" id="BC096546">
    <property type="protein sequence ID" value="AAH96546.1"/>
    <property type="molecule type" value="mRNA"/>
</dbReference>
<dbReference type="EMBL" id="CH466543">
    <property type="protein sequence ID" value="EDL07123.1"/>
    <property type="molecule type" value="Genomic_DNA"/>
</dbReference>
<dbReference type="CCDS" id="CCDS21365.1"/>
<dbReference type="PIR" id="I48686">
    <property type="entry name" value="I48686"/>
</dbReference>
<dbReference type="RefSeq" id="NP_033207.2">
    <property type="nucleotide sequence ID" value="NM_009181.3"/>
</dbReference>
<dbReference type="SMR" id="O35696"/>
<dbReference type="BioGRID" id="203244">
    <property type="interactions" value="1"/>
</dbReference>
<dbReference type="DIP" id="DIP-59528N"/>
<dbReference type="FunCoup" id="O35696">
    <property type="interactions" value="358"/>
</dbReference>
<dbReference type="IntAct" id="O35696">
    <property type="interactions" value="2"/>
</dbReference>
<dbReference type="STRING" id="10090.ENSMUSP00000026896"/>
<dbReference type="CAZy" id="GT29">
    <property type="family name" value="Glycosyltransferase Family 29"/>
</dbReference>
<dbReference type="GlyCosmos" id="O35696">
    <property type="glycosylation" value="6 sites, No reported glycans"/>
</dbReference>
<dbReference type="GlyGen" id="O35696">
    <property type="glycosylation" value="6 sites, 3 N-linked glycans (3 sites)"/>
</dbReference>
<dbReference type="iPTMnet" id="O35696"/>
<dbReference type="PhosphoSitePlus" id="O35696"/>
<dbReference type="jPOST" id="O35696"/>
<dbReference type="PaxDb" id="10090-ENSMUSP00000026896"/>
<dbReference type="ProteomicsDB" id="261360"/>
<dbReference type="Antibodypedia" id="29022">
    <property type="antibodies" value="130 antibodies from 30 providers"/>
</dbReference>
<dbReference type="DNASU" id="20450"/>
<dbReference type="Ensembl" id="ENSMUST00000026896.10">
    <property type="protein sequence ID" value="ENSMUSP00000026896.5"/>
    <property type="gene ID" value="ENSMUSG00000025789.10"/>
</dbReference>
<dbReference type="GeneID" id="20450"/>
<dbReference type="KEGG" id="mmu:20450"/>
<dbReference type="UCSC" id="uc009hwe.2">
    <property type="organism name" value="mouse"/>
</dbReference>
<dbReference type="AGR" id="MGI:106020"/>
<dbReference type="CTD" id="8128"/>
<dbReference type="MGI" id="MGI:106020">
    <property type="gene designation" value="St8sia2"/>
</dbReference>
<dbReference type="VEuPathDB" id="HostDB:ENSMUSG00000025789"/>
<dbReference type="eggNOG" id="KOG2692">
    <property type="taxonomic scope" value="Eukaryota"/>
</dbReference>
<dbReference type="GeneTree" id="ENSGT01030000234535"/>
<dbReference type="HOGENOM" id="CLU_048583_3_0_1"/>
<dbReference type="InParanoid" id="O35696"/>
<dbReference type="OMA" id="ATRFCNT"/>
<dbReference type="OrthoDB" id="10264956at2759"/>
<dbReference type="PhylomeDB" id="O35696"/>
<dbReference type="TreeFam" id="TF352820"/>
<dbReference type="BRENDA" id="2.4.99.8">
    <property type="organism ID" value="3474"/>
</dbReference>
<dbReference type="Reactome" id="R-MMU-4085001">
    <property type="pathway name" value="Sialic acid metabolism"/>
</dbReference>
<dbReference type="Reactome" id="R-MMU-419037">
    <property type="pathway name" value="NCAM1 interactions"/>
</dbReference>
<dbReference type="Reactome" id="R-MMU-975577">
    <property type="pathway name" value="N-Glycan antennae elongation"/>
</dbReference>
<dbReference type="UniPathway" id="UPA00378"/>
<dbReference type="BioGRID-ORCS" id="20450">
    <property type="hits" value="2 hits in 82 CRISPR screens"/>
</dbReference>
<dbReference type="ChiTaRS" id="St8sia2">
    <property type="organism name" value="mouse"/>
</dbReference>
<dbReference type="PRO" id="PR:O35696"/>
<dbReference type="Proteomes" id="UP000000589">
    <property type="component" value="Chromosome 7"/>
</dbReference>
<dbReference type="RNAct" id="O35696">
    <property type="molecule type" value="protein"/>
</dbReference>
<dbReference type="Bgee" id="ENSMUSG00000025789">
    <property type="expression patterns" value="Expressed in rostral migratory stream and 161 other cell types or tissues"/>
</dbReference>
<dbReference type="ExpressionAtlas" id="O35696">
    <property type="expression patterns" value="baseline and differential"/>
</dbReference>
<dbReference type="GO" id="GO:0005829">
    <property type="term" value="C:cytosol"/>
    <property type="evidence" value="ECO:0007669"/>
    <property type="project" value="Ensembl"/>
</dbReference>
<dbReference type="GO" id="GO:0005769">
    <property type="term" value="C:early endosome"/>
    <property type="evidence" value="ECO:0000314"/>
    <property type="project" value="MGI"/>
</dbReference>
<dbReference type="GO" id="GO:0005576">
    <property type="term" value="C:extracellular region"/>
    <property type="evidence" value="ECO:0000250"/>
    <property type="project" value="UniProtKB"/>
</dbReference>
<dbReference type="GO" id="GO:0005794">
    <property type="term" value="C:Golgi apparatus"/>
    <property type="evidence" value="ECO:0000250"/>
    <property type="project" value="UniProtKB"/>
</dbReference>
<dbReference type="GO" id="GO:0000139">
    <property type="term" value="C:Golgi membrane"/>
    <property type="evidence" value="ECO:0007669"/>
    <property type="project" value="UniProtKB-SubCell"/>
</dbReference>
<dbReference type="GO" id="GO:0005654">
    <property type="term" value="C:nucleoplasm"/>
    <property type="evidence" value="ECO:0007669"/>
    <property type="project" value="Ensembl"/>
</dbReference>
<dbReference type="GO" id="GO:0048471">
    <property type="term" value="C:perinuclear region of cytoplasm"/>
    <property type="evidence" value="ECO:0007669"/>
    <property type="project" value="Ensembl"/>
</dbReference>
<dbReference type="GO" id="GO:0005886">
    <property type="term" value="C:plasma membrane"/>
    <property type="evidence" value="ECO:0007669"/>
    <property type="project" value="UniProtKB-SubCell"/>
</dbReference>
<dbReference type="GO" id="GO:0055037">
    <property type="term" value="C:recycling endosome"/>
    <property type="evidence" value="ECO:0000314"/>
    <property type="project" value="MGI"/>
</dbReference>
<dbReference type="GO" id="GO:0003828">
    <property type="term" value="F:alpha-N-acetylneuraminate alpha-2,8-sialyltransferase activity"/>
    <property type="evidence" value="ECO:0000314"/>
    <property type="project" value="UniProtKB"/>
</dbReference>
<dbReference type="GO" id="GO:0000166">
    <property type="term" value="F:nucleotide binding"/>
    <property type="evidence" value="ECO:0007669"/>
    <property type="project" value="UniProtKB-KW"/>
</dbReference>
<dbReference type="GO" id="GO:0001574">
    <property type="term" value="P:ganglioside biosynthetic process"/>
    <property type="evidence" value="ECO:0007669"/>
    <property type="project" value="Ensembl"/>
</dbReference>
<dbReference type="GO" id="GO:0006491">
    <property type="term" value="P:N-glycan processing"/>
    <property type="evidence" value="ECO:0007669"/>
    <property type="project" value="Ensembl"/>
</dbReference>
<dbReference type="GO" id="GO:1990138">
    <property type="term" value="P:neuron projection extension"/>
    <property type="evidence" value="ECO:0007669"/>
    <property type="project" value="Ensembl"/>
</dbReference>
<dbReference type="GO" id="GO:0009311">
    <property type="term" value="P:oligosaccharide metabolic process"/>
    <property type="evidence" value="ECO:0007669"/>
    <property type="project" value="Ensembl"/>
</dbReference>
<dbReference type="GO" id="GO:0043525">
    <property type="term" value="P:positive regulation of neuron apoptotic process"/>
    <property type="evidence" value="ECO:0007669"/>
    <property type="project" value="Ensembl"/>
</dbReference>
<dbReference type="GO" id="GO:0051965">
    <property type="term" value="P:positive regulation of synapse assembly"/>
    <property type="evidence" value="ECO:0007669"/>
    <property type="project" value="Ensembl"/>
</dbReference>
<dbReference type="GO" id="GO:0006486">
    <property type="term" value="P:protein glycosylation"/>
    <property type="evidence" value="ECO:0007669"/>
    <property type="project" value="UniProtKB-UniPathway"/>
</dbReference>
<dbReference type="GO" id="GO:0042220">
    <property type="term" value="P:response to cocaine"/>
    <property type="evidence" value="ECO:0007669"/>
    <property type="project" value="Ensembl"/>
</dbReference>
<dbReference type="GO" id="GO:0097503">
    <property type="term" value="P:sialylation"/>
    <property type="evidence" value="ECO:0000314"/>
    <property type="project" value="UniProtKB"/>
</dbReference>
<dbReference type="CDD" id="cd23987">
    <property type="entry name" value="GT29_ST8SIA2"/>
    <property type="match status" value="1"/>
</dbReference>
<dbReference type="FunFam" id="3.90.1480.20:FF:000001">
    <property type="entry name" value="ST8 alpha-N-acetyl-neuraminide alpha-2,8-sialyltransferase 2"/>
    <property type="match status" value="1"/>
</dbReference>
<dbReference type="Gene3D" id="3.90.1480.20">
    <property type="entry name" value="Glycosyl transferase family 29"/>
    <property type="match status" value="1"/>
</dbReference>
<dbReference type="InterPro" id="IPR001675">
    <property type="entry name" value="Glyco_trans_29"/>
</dbReference>
<dbReference type="InterPro" id="IPR050943">
    <property type="entry name" value="Glycosyltr_29_Sialyltrsf"/>
</dbReference>
<dbReference type="InterPro" id="IPR038578">
    <property type="entry name" value="GT29-like_sf"/>
</dbReference>
<dbReference type="InterPro" id="IPR012163">
    <property type="entry name" value="Sialyl_trans"/>
</dbReference>
<dbReference type="PANTHER" id="PTHR11987">
    <property type="entry name" value="ALPHA-2,8-SIALYLTRANSFERASE"/>
    <property type="match status" value="1"/>
</dbReference>
<dbReference type="PANTHER" id="PTHR11987:SF30">
    <property type="entry name" value="ALPHA-2,8-SIALYLTRANSFERASE 8B"/>
    <property type="match status" value="1"/>
</dbReference>
<dbReference type="Pfam" id="PF00777">
    <property type="entry name" value="Glyco_transf_29"/>
    <property type="match status" value="1"/>
</dbReference>
<dbReference type="PIRSF" id="PIRSF005557">
    <property type="entry name" value="Sialyl_trans"/>
    <property type="match status" value="1"/>
</dbReference>
<reference key="1">
    <citation type="journal article" date="1996" name="J. Biol. Chem.">
        <title>Genomic structure and promoter activity of the mouse polysialic acid synthase gene (mST8Sia II). Brain-specific expression from a TATA-less GC-rich sequence.</title>
        <authorList>
            <person name="Yoshida Y."/>
            <person name="Kurosawa N."/>
            <person name="Kanematsu T."/>
            <person name="Kojima N."/>
            <person name="Tsuji S."/>
        </authorList>
    </citation>
    <scope>NUCLEOTIDE SEQUENCE [GENOMIC DNA / MRNA]</scope>
    <source>
        <tissue>Brain</tissue>
    </source>
</reference>
<reference key="2">
    <citation type="journal article" date="1995" name="FEBS Lett.">
        <title>Enzymatic activity of a developmentally regulated member of the sialyltransferase family (STX): evidence for alpha 2,8-sialyltransferase activity toward N-linked oligosaccharides.</title>
        <authorList>
            <person name="Kojima N."/>
            <person name="Yoshida Y."/>
            <person name="Kurosawa N."/>
            <person name="Lee Y.C."/>
            <person name="Tsuji S."/>
        </authorList>
    </citation>
    <scope>NUCLEOTIDE SEQUENCE [MRNA]</scope>
    <scope>FUNCTION</scope>
    <scope>CATALYTIC ACTIVITY</scope>
    <scope>PATHWAY</scope>
    <source>
        <tissue>Brain</tissue>
    </source>
</reference>
<reference key="3">
    <citation type="submission" date="2005-09" db="EMBL/GenBank/DDBJ databases">
        <authorList>
            <person name="Mural R.J."/>
            <person name="Adams M.D."/>
            <person name="Myers E.W."/>
            <person name="Smith H.O."/>
            <person name="Venter J.C."/>
        </authorList>
    </citation>
    <scope>NUCLEOTIDE SEQUENCE [LARGE SCALE GENOMIC DNA]</scope>
</reference>
<reference key="4">
    <citation type="journal article" date="2004" name="Genome Res.">
        <title>The status, quality, and expansion of the NIH full-length cDNA project: the Mammalian Gene Collection (MGC).</title>
        <authorList>
            <consortium name="The MGC Project Team"/>
        </authorList>
    </citation>
    <scope>NUCLEOTIDE SEQUENCE [LARGE SCALE MRNA]</scope>
    <source>
        <strain>C57BL/6J</strain>
        <tissue>Brain</tissue>
    </source>
</reference>
<reference key="5">
    <citation type="journal article" date="2017" name="Glia">
        <title>ST8SIA2 promotes oligodendrocyte differentiation and the integrity of myelin and axons.</title>
        <authorList>
            <person name="Szewczyk L.M."/>
            <person name="Brozko N."/>
            <person name="Nagalski A."/>
            <person name="Roeckle I."/>
            <person name="Werneburg S."/>
            <person name="Hildebrandt H."/>
            <person name="Wisniewska M.B."/>
            <person name="Kuznicki J."/>
        </authorList>
    </citation>
    <scope>FUNCTION</scope>
</reference>
<sequence length="375" mass="42411">MQLQFRSWMLAALTLLVVFLIFADISEIEEEIGNSGGRGTIRSAVNSLHSKSNRAEVVINGSSPPAVADRSNESLKHNIQPASSKWRHNQTLSLRIRKQILKFLDAEKDISVLKGTLKPGDIIHYIFDRDSTMNVSQNLYELLPRTSPLKNKHFQTCAIVGNSGVLLNSGCGQEIDTHSFVIRCNLAPVQEYARDVGLKTDLVTMNPSVIQRAFEDLVNATWREKLLQRLHGLNGSILWIPAFMARGGKERVEWVNALILKHHVNVRTAYPSLRLLHAVRGYWLTNKVHIKRPTTGLLMYTLATRFCNQIYLYGFWPFPLDQNQNPVKYHYYDSLKYGYTSQASPHTMPLEFKALKSLHEQGALKLTVGQCDGAT</sequence>
<organism>
    <name type="scientific">Mus musculus</name>
    <name type="common">Mouse</name>
    <dbReference type="NCBI Taxonomy" id="10090"/>
    <lineage>
        <taxon>Eukaryota</taxon>
        <taxon>Metazoa</taxon>
        <taxon>Chordata</taxon>
        <taxon>Craniata</taxon>
        <taxon>Vertebrata</taxon>
        <taxon>Euteleostomi</taxon>
        <taxon>Mammalia</taxon>
        <taxon>Eutheria</taxon>
        <taxon>Euarchontoglires</taxon>
        <taxon>Glires</taxon>
        <taxon>Rodentia</taxon>
        <taxon>Myomorpha</taxon>
        <taxon>Muroidea</taxon>
        <taxon>Muridae</taxon>
        <taxon>Murinae</taxon>
        <taxon>Mus</taxon>
        <taxon>Mus</taxon>
    </lineage>
</organism>
<evidence type="ECO:0000250" key="1">
    <source>
        <dbReference type="UniProtKB" id="O43173"/>
    </source>
</evidence>
<evidence type="ECO:0000250" key="2">
    <source>
        <dbReference type="UniProtKB" id="Q92186"/>
    </source>
</evidence>
<evidence type="ECO:0000255" key="3"/>
<evidence type="ECO:0000269" key="4">
    <source>
    </source>
</evidence>
<evidence type="ECO:0000269" key="5">
    <source>
    </source>
</evidence>
<evidence type="ECO:0000305" key="6"/>
<evidence type="ECO:0000312" key="7">
    <source>
        <dbReference type="MGI" id="MGI:106020"/>
    </source>
</evidence>
<comment type="function">
    <text evidence="2 4 5">Catalyzes the transfer of a sialic acid from a CMP-linked sialic acid donor onto a terminal alpha-2,3-, alpha-2,6-, or alpha-2,8-linked sialic acid of an N-linked glycan acceptor through alpha-2,8-linkages (PubMed:7875291). Therefore, participates in polysialic acid synthesis on various sialylated N-acetyllactosaminyl oligosaccharides (alpha-2,3-, alpha-2,6-, or alpha-2,8-linked sialic acid), including NCAM1, NCAM1 N-glycans, FETUB N-glycans, and to a lesser extent sialylparagloboside (SPG) and AHSG, which does not require the initial addition of an alpha 2,8-sialic acid (By similarity). However, does not exhibit sialic acid-polymerase activity (PubMed:7875291). Catalyzes polysialic acid synthesis in the hippocampal on NCAM1 and supports neurite outgrowth (PubMed:7875291). ST8SIA2-mediated polysialylation influences on oligodendrocyte differentiation and may promote the integrity of myelin and axons (PubMed:27534376).</text>
</comment>
<comment type="catalytic activity">
    <reaction evidence="5">
        <text>[N-acetyl-alpha-D-neuraminosyl-(2-&gt;8)](n) + CMP-N-acetyl-beta-neuraminate = [N-acetyl-alpha-D-neuraminosyl-(2-&gt;8)](n+1) + CMP + H(+)</text>
        <dbReference type="Rhea" id="RHEA:77367"/>
        <dbReference type="Rhea" id="RHEA-COMP:14315"/>
        <dbReference type="Rhea" id="RHEA-COMP:18878"/>
        <dbReference type="ChEBI" id="CHEBI:15378"/>
        <dbReference type="ChEBI" id="CHEBI:57812"/>
        <dbReference type="ChEBI" id="CHEBI:60377"/>
        <dbReference type="ChEBI" id="CHEBI:139252"/>
    </reaction>
    <physiologicalReaction direction="left-to-right" evidence="5">
        <dbReference type="Rhea" id="RHEA:77368"/>
    </physiologicalReaction>
</comment>
<comment type="pathway">
    <text evidence="5">Protein modification; protein glycosylation.</text>
</comment>
<comment type="interaction">
    <interactant intactId="EBI-15854779">
        <id>O35696</id>
    </interactant>
    <interactant intactId="EBI-5652260">
        <id>Q9BY67</id>
        <label>CADM1</label>
    </interactant>
    <organismsDiffer>true</organismsDiffer>
    <experiments>2</experiments>
</comment>
<comment type="subcellular location">
    <subcellularLocation>
        <location evidence="2">Golgi apparatus membrane</location>
        <topology evidence="2">Single-pass type II membrane protein</topology>
    </subcellularLocation>
    <subcellularLocation>
        <location evidence="2">Secreted</location>
    </subcellularLocation>
    <subcellularLocation>
        <location evidence="2">Cell membrane</location>
    </subcellularLocation>
    <text evidence="2">Also trafficks to the cell surface.</text>
</comment>
<comment type="PTM">
    <text evidence="2">Autopolysialylated. Autopolysialylation is not a prerequisite for the polysialylation acitity, but enhances the polysialylation acitity.</text>
</comment>
<comment type="similarity">
    <text evidence="6">Belongs to the glycosyltransferase 29 family.</text>
</comment>
<comment type="online information" name="Functional Glycomics Gateway - GTase">
    <link uri="http://www.functionalglycomics.org/glycomics/molecule/jsp/glycoEnzyme/viewGlycoEnzyme.jsp?gbpId=gt_mou_657"/>
    <text>ST8Sia II</text>
</comment>